<comment type="similarity">
    <text evidence="1">Belongs to the universal ribosomal protein uS9 family.</text>
</comment>
<evidence type="ECO:0000255" key="1">
    <source>
        <dbReference type="HAMAP-Rule" id="MF_00532"/>
    </source>
</evidence>
<evidence type="ECO:0000256" key="2">
    <source>
        <dbReference type="SAM" id="MobiDB-lite"/>
    </source>
</evidence>
<evidence type="ECO:0000305" key="3"/>
<accession>Q1WSC3</accession>
<proteinExistence type="inferred from homology"/>
<keyword id="KW-1185">Reference proteome</keyword>
<keyword id="KW-0687">Ribonucleoprotein</keyword>
<keyword id="KW-0689">Ribosomal protein</keyword>
<dbReference type="EMBL" id="CP000233">
    <property type="protein sequence ID" value="ABE00206.1"/>
    <property type="molecule type" value="Genomic_DNA"/>
</dbReference>
<dbReference type="RefSeq" id="WP_011476332.1">
    <property type="nucleotide sequence ID" value="NC_007929.1"/>
</dbReference>
<dbReference type="RefSeq" id="YP_536289.1">
    <property type="nucleotide sequence ID" value="NC_007929.1"/>
</dbReference>
<dbReference type="SMR" id="Q1WSC3"/>
<dbReference type="STRING" id="362948.LSL_1402"/>
<dbReference type="KEGG" id="lsl:LSL_1402"/>
<dbReference type="PATRIC" id="fig|362948.14.peg.1485"/>
<dbReference type="HOGENOM" id="CLU_046483_2_1_9"/>
<dbReference type="OrthoDB" id="9803965at2"/>
<dbReference type="Proteomes" id="UP000006559">
    <property type="component" value="Chromosome"/>
</dbReference>
<dbReference type="GO" id="GO:0022627">
    <property type="term" value="C:cytosolic small ribosomal subunit"/>
    <property type="evidence" value="ECO:0007669"/>
    <property type="project" value="TreeGrafter"/>
</dbReference>
<dbReference type="GO" id="GO:0003723">
    <property type="term" value="F:RNA binding"/>
    <property type="evidence" value="ECO:0007669"/>
    <property type="project" value="TreeGrafter"/>
</dbReference>
<dbReference type="GO" id="GO:0003735">
    <property type="term" value="F:structural constituent of ribosome"/>
    <property type="evidence" value="ECO:0007669"/>
    <property type="project" value="InterPro"/>
</dbReference>
<dbReference type="GO" id="GO:0006412">
    <property type="term" value="P:translation"/>
    <property type="evidence" value="ECO:0007669"/>
    <property type="project" value="UniProtKB-UniRule"/>
</dbReference>
<dbReference type="FunFam" id="3.30.230.10:FF:000001">
    <property type="entry name" value="30S ribosomal protein S9"/>
    <property type="match status" value="1"/>
</dbReference>
<dbReference type="Gene3D" id="3.30.230.10">
    <property type="match status" value="1"/>
</dbReference>
<dbReference type="HAMAP" id="MF_00532_B">
    <property type="entry name" value="Ribosomal_uS9_B"/>
    <property type="match status" value="1"/>
</dbReference>
<dbReference type="InterPro" id="IPR020568">
    <property type="entry name" value="Ribosomal_Su5_D2-typ_SF"/>
</dbReference>
<dbReference type="InterPro" id="IPR000754">
    <property type="entry name" value="Ribosomal_uS9"/>
</dbReference>
<dbReference type="InterPro" id="IPR023035">
    <property type="entry name" value="Ribosomal_uS9_bac/plastid"/>
</dbReference>
<dbReference type="InterPro" id="IPR020574">
    <property type="entry name" value="Ribosomal_uS9_CS"/>
</dbReference>
<dbReference type="InterPro" id="IPR014721">
    <property type="entry name" value="Ribsml_uS5_D2-typ_fold_subgr"/>
</dbReference>
<dbReference type="NCBIfam" id="NF001099">
    <property type="entry name" value="PRK00132.1"/>
    <property type="match status" value="1"/>
</dbReference>
<dbReference type="PANTHER" id="PTHR21569">
    <property type="entry name" value="RIBOSOMAL PROTEIN S9"/>
    <property type="match status" value="1"/>
</dbReference>
<dbReference type="PANTHER" id="PTHR21569:SF1">
    <property type="entry name" value="SMALL RIBOSOMAL SUBUNIT PROTEIN US9M"/>
    <property type="match status" value="1"/>
</dbReference>
<dbReference type="Pfam" id="PF00380">
    <property type="entry name" value="Ribosomal_S9"/>
    <property type="match status" value="1"/>
</dbReference>
<dbReference type="SUPFAM" id="SSF54211">
    <property type="entry name" value="Ribosomal protein S5 domain 2-like"/>
    <property type="match status" value="1"/>
</dbReference>
<dbReference type="PROSITE" id="PS00360">
    <property type="entry name" value="RIBOSOMAL_S9"/>
    <property type="match status" value="1"/>
</dbReference>
<feature type="chain" id="PRO_1000051243" description="Small ribosomal subunit protein uS9">
    <location>
        <begin position="1"/>
        <end position="130"/>
    </location>
</feature>
<feature type="region of interest" description="Disordered" evidence="2">
    <location>
        <begin position="107"/>
        <end position="130"/>
    </location>
</feature>
<feature type="compositionally biased region" description="Basic residues" evidence="2">
    <location>
        <begin position="111"/>
        <end position="130"/>
    </location>
</feature>
<name>RS9_LIGS1</name>
<sequence>MAQVQYQGTGRRKNSVARVRLVPGTGKITMNGKPAEEYIPFANIREDMVQPFGVTETKGQYDVFVNVNGGGFSGQAGATRHGIARALLEVDPDFRGVLKSTGLLTRDARMKERKKPGLKKARKASQFSKR</sequence>
<reference key="1">
    <citation type="journal article" date="2006" name="Proc. Natl. Acad. Sci. U.S.A.">
        <title>Multireplicon genome architecture of Lactobacillus salivarius.</title>
        <authorList>
            <person name="Claesson M.J."/>
            <person name="Li Y."/>
            <person name="Leahy S."/>
            <person name="Canchaya C."/>
            <person name="van Pijkeren J.P."/>
            <person name="Cerdeno-Tarraga A.M."/>
            <person name="Parkhill J."/>
            <person name="Flynn S."/>
            <person name="O'Sullivan G.C."/>
            <person name="Collins J.K."/>
            <person name="Higgins D."/>
            <person name="Shanahan F."/>
            <person name="Fitzgerald G.F."/>
            <person name="van Sinderen D."/>
            <person name="O'Toole P.W."/>
        </authorList>
    </citation>
    <scope>NUCLEOTIDE SEQUENCE [LARGE SCALE GENOMIC DNA]</scope>
    <source>
        <strain>UCC118</strain>
    </source>
</reference>
<protein>
    <recommendedName>
        <fullName evidence="1">Small ribosomal subunit protein uS9</fullName>
    </recommendedName>
    <alternativeName>
        <fullName evidence="3">30S ribosomal protein S9</fullName>
    </alternativeName>
</protein>
<gene>
    <name evidence="1" type="primary">rpsI</name>
    <name type="ordered locus">LSL_1402</name>
</gene>
<organism>
    <name type="scientific">Ligilactobacillus salivarius (strain UCC118)</name>
    <name type="common">Lactobacillus salivarius</name>
    <dbReference type="NCBI Taxonomy" id="362948"/>
    <lineage>
        <taxon>Bacteria</taxon>
        <taxon>Bacillati</taxon>
        <taxon>Bacillota</taxon>
        <taxon>Bacilli</taxon>
        <taxon>Lactobacillales</taxon>
        <taxon>Lactobacillaceae</taxon>
        <taxon>Ligilactobacillus</taxon>
    </lineage>
</organism>